<dbReference type="EMBL" id="AJ938182">
    <property type="protein sequence ID" value="CAI81136.1"/>
    <property type="molecule type" value="Genomic_DNA"/>
</dbReference>
<dbReference type="RefSeq" id="WP_000048060.1">
    <property type="nucleotide sequence ID" value="NC_007622.1"/>
</dbReference>
<dbReference type="PDB" id="6FXC">
    <property type="method" value="EM"/>
    <property type="resolution" value="6.76 A"/>
    <property type="chains" value="Au/Bu=4-55"/>
</dbReference>
<dbReference type="PDBsum" id="6FXC"/>
<dbReference type="EMDB" id="EMD-3637"/>
<dbReference type="SMR" id="Q2YT04"/>
<dbReference type="GeneID" id="98345946"/>
<dbReference type="KEGG" id="sab:SAB1447c"/>
<dbReference type="HOGENOM" id="CLU_159258_3_2_9"/>
<dbReference type="GO" id="GO:1990904">
    <property type="term" value="C:ribonucleoprotein complex"/>
    <property type="evidence" value="ECO:0007669"/>
    <property type="project" value="UniProtKB-KW"/>
</dbReference>
<dbReference type="GO" id="GO:0005840">
    <property type="term" value="C:ribosome"/>
    <property type="evidence" value="ECO:0007669"/>
    <property type="project" value="UniProtKB-KW"/>
</dbReference>
<dbReference type="GO" id="GO:0003735">
    <property type="term" value="F:structural constituent of ribosome"/>
    <property type="evidence" value="ECO:0007669"/>
    <property type="project" value="InterPro"/>
</dbReference>
<dbReference type="GO" id="GO:0006412">
    <property type="term" value="P:translation"/>
    <property type="evidence" value="ECO:0007669"/>
    <property type="project" value="UniProtKB-UniRule"/>
</dbReference>
<dbReference type="Gene3D" id="1.20.5.1150">
    <property type="entry name" value="Ribosomal protein S8"/>
    <property type="match status" value="1"/>
</dbReference>
<dbReference type="HAMAP" id="MF_00358">
    <property type="entry name" value="Ribosomal_bS21"/>
    <property type="match status" value="1"/>
</dbReference>
<dbReference type="InterPro" id="IPR001911">
    <property type="entry name" value="Ribosomal_bS21"/>
</dbReference>
<dbReference type="InterPro" id="IPR018278">
    <property type="entry name" value="Ribosomal_bS21_CS"/>
</dbReference>
<dbReference type="InterPro" id="IPR038380">
    <property type="entry name" value="Ribosomal_bS21_sf"/>
</dbReference>
<dbReference type="NCBIfam" id="TIGR00030">
    <property type="entry name" value="S21p"/>
    <property type="match status" value="1"/>
</dbReference>
<dbReference type="PANTHER" id="PTHR21109">
    <property type="entry name" value="MITOCHONDRIAL 28S RIBOSOMAL PROTEIN S21"/>
    <property type="match status" value="1"/>
</dbReference>
<dbReference type="PANTHER" id="PTHR21109:SF22">
    <property type="entry name" value="SMALL RIBOSOMAL SUBUNIT PROTEIN BS21"/>
    <property type="match status" value="1"/>
</dbReference>
<dbReference type="Pfam" id="PF01165">
    <property type="entry name" value="Ribosomal_S21"/>
    <property type="match status" value="1"/>
</dbReference>
<dbReference type="PRINTS" id="PR00976">
    <property type="entry name" value="RIBOSOMALS21"/>
</dbReference>
<dbReference type="PROSITE" id="PS01181">
    <property type="entry name" value="RIBOSOMAL_S21"/>
    <property type="match status" value="1"/>
</dbReference>
<proteinExistence type="evidence at protein level"/>
<evidence type="ECO:0000255" key="1">
    <source>
        <dbReference type="HAMAP-Rule" id="MF_00358"/>
    </source>
</evidence>
<evidence type="ECO:0000305" key="2"/>
<name>RS21_STAAB</name>
<sequence>MSKTVVRKNESLEDALRRFKRSVSKSGTIQEVRKREFYEKPSVKRKKKSEAARKRKFK</sequence>
<keyword id="KW-0002">3D-structure</keyword>
<keyword id="KW-0687">Ribonucleoprotein</keyword>
<keyword id="KW-0689">Ribosomal protein</keyword>
<gene>
    <name evidence="1" type="primary">rpsU</name>
    <name type="ordered locus">SAB1447c</name>
</gene>
<comment type="similarity">
    <text evidence="1">Belongs to the bacterial ribosomal protein bS21 family.</text>
</comment>
<reference key="1">
    <citation type="journal article" date="2007" name="PLoS ONE">
        <title>Molecular correlates of host specialization in Staphylococcus aureus.</title>
        <authorList>
            <person name="Herron-Olson L."/>
            <person name="Fitzgerald J.R."/>
            <person name="Musser J.M."/>
            <person name="Kapur V."/>
        </authorList>
    </citation>
    <scope>NUCLEOTIDE SEQUENCE [LARGE SCALE GENOMIC DNA]</scope>
    <source>
        <strain>bovine RF122 / ET3-1</strain>
    </source>
</reference>
<organism>
    <name type="scientific">Staphylococcus aureus (strain bovine RF122 / ET3-1)</name>
    <dbReference type="NCBI Taxonomy" id="273036"/>
    <lineage>
        <taxon>Bacteria</taxon>
        <taxon>Bacillati</taxon>
        <taxon>Bacillota</taxon>
        <taxon>Bacilli</taxon>
        <taxon>Bacillales</taxon>
        <taxon>Staphylococcaceae</taxon>
        <taxon>Staphylococcus</taxon>
    </lineage>
</organism>
<protein>
    <recommendedName>
        <fullName evidence="1">Small ribosomal subunit protein bS21</fullName>
    </recommendedName>
    <alternativeName>
        <fullName evidence="2">30S ribosomal protein S21</fullName>
    </alternativeName>
</protein>
<feature type="chain" id="PRO_0000266771" description="Small ribosomal subunit protein bS21">
    <location>
        <begin position="1"/>
        <end position="58"/>
    </location>
</feature>
<accession>Q2YT04</accession>